<keyword id="KW-0029">Amino-acid transport</keyword>
<keyword id="KW-0472">Membrane</keyword>
<keyword id="KW-0812">Transmembrane</keyword>
<keyword id="KW-1133">Transmembrane helix</keyword>
<keyword id="KW-0813">Transport</keyword>
<proteinExistence type="inferred from homology"/>
<name>TCYP_BACHK</name>
<sequence>MNTLLVGINVAVMLILVGVLYYMQRKHVSFNKRVFTALGVGIIFGLILQFIYEPTSKVIIESNTWFGLIGSGYVKLLQMIVMPLILVSIISAFTKLQLTKNLGKISGLIIGILILTTGIAAAVGIAASAGFDVSATGLQQGDAESARLKLVEERFTSIEKTTIPDKLLELLPTNPFLDLTGARPTSTISVVIFAAFIGIAFIGVKRKYPEQAELFKKMLDAVYAIVMRMVTLILRLTPYGVLALMAKTVAGSDINAILKLGNFVLASYVALIVMFVIHLLLIALSGLNPIQYLKKVFPVLTFAFTSRSSAGAMPLNIEAQKEKLGISEGIANFAASFGVSIGQNGCAGIYPAMLAMMVAPTVGIDPLQPQFILTLIAVVAISSFGVAGVGGGATFAALIVLSTMNLPIGIVALVISVEPLIDMGRTALNVSGSMTAGLISSKWLGELDQDTYNQDDTKTGEIAS</sequence>
<dbReference type="EMBL" id="AE017355">
    <property type="protein sequence ID" value="AAT60793.1"/>
    <property type="molecule type" value="Genomic_DNA"/>
</dbReference>
<dbReference type="RefSeq" id="WP_001094341.1">
    <property type="nucleotide sequence ID" value="NC_005957.1"/>
</dbReference>
<dbReference type="RefSeq" id="YP_038307.1">
    <property type="nucleotide sequence ID" value="NC_005957.1"/>
</dbReference>
<dbReference type="SMR" id="Q6HDR9"/>
<dbReference type="KEGG" id="btk:BT9727_3988"/>
<dbReference type="PATRIC" id="fig|281309.8.peg.4253"/>
<dbReference type="HOGENOM" id="CLU_019375_0_1_9"/>
<dbReference type="Proteomes" id="UP000001301">
    <property type="component" value="Chromosome"/>
</dbReference>
<dbReference type="GO" id="GO:0005886">
    <property type="term" value="C:plasma membrane"/>
    <property type="evidence" value="ECO:0007669"/>
    <property type="project" value="TreeGrafter"/>
</dbReference>
<dbReference type="GO" id="GO:0015184">
    <property type="term" value="F:L-cystine transmembrane transporter activity"/>
    <property type="evidence" value="ECO:0007669"/>
    <property type="project" value="TreeGrafter"/>
</dbReference>
<dbReference type="GO" id="GO:0015293">
    <property type="term" value="F:symporter activity"/>
    <property type="evidence" value="ECO:0007669"/>
    <property type="project" value="InterPro"/>
</dbReference>
<dbReference type="FunFam" id="1.10.3860.10:FF:000004">
    <property type="entry name" value="L-cystine transporter tcyP"/>
    <property type="match status" value="1"/>
</dbReference>
<dbReference type="Gene3D" id="1.10.3860.10">
    <property type="entry name" value="Sodium:dicarboxylate symporter"/>
    <property type="match status" value="1"/>
</dbReference>
<dbReference type="InterPro" id="IPR001991">
    <property type="entry name" value="Na-dicarboxylate_symporter"/>
</dbReference>
<dbReference type="InterPro" id="IPR036458">
    <property type="entry name" value="Na:dicarbo_symporter_sf"/>
</dbReference>
<dbReference type="PANTHER" id="PTHR42865:SF5">
    <property type="entry name" value="L-CYSTINE TRANSPORTER TCYP"/>
    <property type="match status" value="1"/>
</dbReference>
<dbReference type="PANTHER" id="PTHR42865">
    <property type="entry name" value="PROTON/GLUTAMATE-ASPARTATE SYMPORTER"/>
    <property type="match status" value="1"/>
</dbReference>
<dbReference type="Pfam" id="PF00375">
    <property type="entry name" value="SDF"/>
    <property type="match status" value="1"/>
</dbReference>
<dbReference type="PRINTS" id="PR00173">
    <property type="entry name" value="EDTRNSPORT"/>
</dbReference>
<dbReference type="SUPFAM" id="SSF118215">
    <property type="entry name" value="Proton glutamate symport protein"/>
    <property type="match status" value="1"/>
</dbReference>
<feature type="chain" id="PRO_0000279742" description="L-cystine uptake protein TcyP">
    <location>
        <begin position="1"/>
        <end position="464"/>
    </location>
</feature>
<feature type="transmembrane region" description="Helical" evidence="2">
    <location>
        <begin position="3"/>
        <end position="23"/>
    </location>
</feature>
<feature type="transmembrane region" description="Helical" evidence="2">
    <location>
        <begin position="34"/>
        <end position="54"/>
    </location>
</feature>
<feature type="transmembrane region" description="Helical" evidence="2">
    <location>
        <begin position="73"/>
        <end position="93"/>
    </location>
</feature>
<feature type="transmembrane region" description="Helical" evidence="2">
    <location>
        <begin position="107"/>
        <end position="127"/>
    </location>
</feature>
<feature type="transmembrane region" description="Helical" evidence="2">
    <location>
        <begin position="184"/>
        <end position="204"/>
    </location>
</feature>
<feature type="transmembrane region" description="Helical" evidence="2">
    <location>
        <begin position="225"/>
        <end position="245"/>
    </location>
</feature>
<feature type="transmembrane region" description="Helical" evidence="2">
    <location>
        <begin position="263"/>
        <end position="283"/>
    </location>
</feature>
<feature type="transmembrane region" description="Helical" evidence="2">
    <location>
        <begin position="347"/>
        <end position="367"/>
    </location>
</feature>
<feature type="transmembrane region" description="Helical" evidence="2">
    <location>
        <begin position="371"/>
        <end position="391"/>
    </location>
</feature>
<feature type="transmembrane region" description="Helical" evidence="2">
    <location>
        <begin position="395"/>
        <end position="415"/>
    </location>
</feature>
<gene>
    <name type="ordered locus">BT9727_3988</name>
</gene>
<evidence type="ECO:0000250" key="1"/>
<evidence type="ECO:0000255" key="2"/>
<evidence type="ECO:0000305" key="3"/>
<protein>
    <recommendedName>
        <fullName>L-cystine uptake protein TcyP</fullName>
    </recommendedName>
    <alternativeName>
        <fullName>Transporter of cystine TcyP</fullName>
    </alternativeName>
</protein>
<accession>Q6HDR9</accession>
<reference key="1">
    <citation type="journal article" date="2006" name="J. Bacteriol.">
        <title>Pathogenomic sequence analysis of Bacillus cereus and Bacillus thuringiensis isolates closely related to Bacillus anthracis.</title>
        <authorList>
            <person name="Han C.S."/>
            <person name="Xie G."/>
            <person name="Challacombe J.F."/>
            <person name="Altherr M.R."/>
            <person name="Bhotika S.S."/>
            <person name="Bruce D."/>
            <person name="Campbell C.S."/>
            <person name="Campbell M.L."/>
            <person name="Chen J."/>
            <person name="Chertkov O."/>
            <person name="Cleland C."/>
            <person name="Dimitrijevic M."/>
            <person name="Doggett N.A."/>
            <person name="Fawcett J.J."/>
            <person name="Glavina T."/>
            <person name="Goodwin L.A."/>
            <person name="Hill K.K."/>
            <person name="Hitchcock P."/>
            <person name="Jackson P.J."/>
            <person name="Keim P."/>
            <person name="Kewalramani A.R."/>
            <person name="Longmire J."/>
            <person name="Lucas S."/>
            <person name="Malfatti S."/>
            <person name="McMurry K."/>
            <person name="Meincke L.J."/>
            <person name="Misra M."/>
            <person name="Moseman B.L."/>
            <person name="Mundt M."/>
            <person name="Munk A.C."/>
            <person name="Okinaka R.T."/>
            <person name="Parson-Quintana B."/>
            <person name="Reilly L.P."/>
            <person name="Richardson P."/>
            <person name="Robinson D.L."/>
            <person name="Rubin E."/>
            <person name="Saunders E."/>
            <person name="Tapia R."/>
            <person name="Tesmer J.G."/>
            <person name="Thayer N."/>
            <person name="Thompson L.S."/>
            <person name="Tice H."/>
            <person name="Ticknor L.O."/>
            <person name="Wills P.L."/>
            <person name="Brettin T.S."/>
            <person name="Gilna P."/>
        </authorList>
    </citation>
    <scope>NUCLEOTIDE SEQUENCE [LARGE SCALE GENOMIC DNA]</scope>
    <source>
        <strain>97-27</strain>
    </source>
</reference>
<comment type="function">
    <text evidence="1">Mediates uptake of L-cystine, the oxidized form of L-cysteine.</text>
</comment>
<comment type="subcellular location">
    <subcellularLocation>
        <location evidence="3">Membrane</location>
        <topology evidence="3">Multi-pass membrane protein</topology>
    </subcellularLocation>
</comment>
<comment type="similarity">
    <text evidence="3">Belongs to the dicarboxylate/amino acid:cation symporter (DAACS) (TC 2.A.23) family.</text>
</comment>
<organism>
    <name type="scientific">Bacillus thuringiensis subsp. konkukian (strain 97-27)</name>
    <dbReference type="NCBI Taxonomy" id="281309"/>
    <lineage>
        <taxon>Bacteria</taxon>
        <taxon>Bacillati</taxon>
        <taxon>Bacillota</taxon>
        <taxon>Bacilli</taxon>
        <taxon>Bacillales</taxon>
        <taxon>Bacillaceae</taxon>
        <taxon>Bacillus</taxon>
        <taxon>Bacillus cereus group</taxon>
    </lineage>
</organism>